<sequence>MSKNTINLQDNVLNQVRKNKITVTIFLVNGYKIRGLIKSFDNFTLLMEVNGEQQMIYKHAVSTIIPGKTLNLFSDQSDKNDQEQ</sequence>
<evidence type="ECO:0000255" key="1">
    <source>
        <dbReference type="HAMAP-Rule" id="MF_00436"/>
    </source>
</evidence>
<evidence type="ECO:0000255" key="2">
    <source>
        <dbReference type="PROSITE-ProRule" id="PRU01346"/>
    </source>
</evidence>
<protein>
    <recommendedName>
        <fullName evidence="1">RNA-binding protein Hfq</fullName>
    </recommendedName>
</protein>
<reference key="1">
    <citation type="submission" date="2008-04" db="EMBL/GenBank/DDBJ databases">
        <title>Complete sequence of chromosome of Natranaerobius thermophilus JW/NM-WN-LF.</title>
        <authorList>
            <consortium name="US DOE Joint Genome Institute"/>
            <person name="Copeland A."/>
            <person name="Lucas S."/>
            <person name="Lapidus A."/>
            <person name="Glavina del Rio T."/>
            <person name="Dalin E."/>
            <person name="Tice H."/>
            <person name="Bruce D."/>
            <person name="Goodwin L."/>
            <person name="Pitluck S."/>
            <person name="Chertkov O."/>
            <person name="Brettin T."/>
            <person name="Detter J.C."/>
            <person name="Han C."/>
            <person name="Kuske C.R."/>
            <person name="Schmutz J."/>
            <person name="Larimer F."/>
            <person name="Land M."/>
            <person name="Hauser L."/>
            <person name="Kyrpides N."/>
            <person name="Lykidis A."/>
            <person name="Mesbah N.M."/>
            <person name="Wiegel J."/>
        </authorList>
    </citation>
    <scope>NUCLEOTIDE SEQUENCE [LARGE SCALE GENOMIC DNA]</scope>
    <source>
        <strain>ATCC BAA-1301 / DSM 18059 / JW/NM-WN-LF</strain>
    </source>
</reference>
<dbReference type="EMBL" id="CP001034">
    <property type="protein sequence ID" value="ACB85082.1"/>
    <property type="molecule type" value="Genomic_DNA"/>
</dbReference>
<dbReference type="RefSeq" id="WP_012447954.1">
    <property type="nucleotide sequence ID" value="NC_010718.1"/>
</dbReference>
<dbReference type="SMR" id="B2A3Y0"/>
<dbReference type="FunCoup" id="B2A3Y0">
    <property type="interactions" value="89"/>
</dbReference>
<dbReference type="STRING" id="457570.Nther_1499"/>
<dbReference type="KEGG" id="nth:Nther_1499"/>
<dbReference type="eggNOG" id="COG1923">
    <property type="taxonomic scope" value="Bacteria"/>
</dbReference>
<dbReference type="HOGENOM" id="CLU_113688_3_0_9"/>
<dbReference type="InParanoid" id="B2A3Y0"/>
<dbReference type="OrthoDB" id="9799751at2"/>
<dbReference type="Proteomes" id="UP000001683">
    <property type="component" value="Chromosome"/>
</dbReference>
<dbReference type="GO" id="GO:0005829">
    <property type="term" value="C:cytosol"/>
    <property type="evidence" value="ECO:0007669"/>
    <property type="project" value="TreeGrafter"/>
</dbReference>
<dbReference type="GO" id="GO:0003723">
    <property type="term" value="F:RNA binding"/>
    <property type="evidence" value="ECO:0007669"/>
    <property type="project" value="UniProtKB-UniRule"/>
</dbReference>
<dbReference type="GO" id="GO:0006355">
    <property type="term" value="P:regulation of DNA-templated transcription"/>
    <property type="evidence" value="ECO:0007669"/>
    <property type="project" value="InterPro"/>
</dbReference>
<dbReference type="GO" id="GO:0043487">
    <property type="term" value="P:regulation of RNA stability"/>
    <property type="evidence" value="ECO:0007669"/>
    <property type="project" value="TreeGrafter"/>
</dbReference>
<dbReference type="GO" id="GO:0045974">
    <property type="term" value="P:regulation of translation, ncRNA-mediated"/>
    <property type="evidence" value="ECO:0007669"/>
    <property type="project" value="TreeGrafter"/>
</dbReference>
<dbReference type="CDD" id="cd01716">
    <property type="entry name" value="Hfq"/>
    <property type="match status" value="1"/>
</dbReference>
<dbReference type="Gene3D" id="2.30.30.100">
    <property type="match status" value="1"/>
</dbReference>
<dbReference type="HAMAP" id="MF_00436">
    <property type="entry name" value="Hfq"/>
    <property type="match status" value="1"/>
</dbReference>
<dbReference type="InterPro" id="IPR005001">
    <property type="entry name" value="Hfq"/>
</dbReference>
<dbReference type="InterPro" id="IPR010920">
    <property type="entry name" value="LSM_dom_sf"/>
</dbReference>
<dbReference type="InterPro" id="IPR047575">
    <property type="entry name" value="Sm"/>
</dbReference>
<dbReference type="NCBIfam" id="TIGR02383">
    <property type="entry name" value="Hfq"/>
    <property type="match status" value="1"/>
</dbReference>
<dbReference type="NCBIfam" id="NF001602">
    <property type="entry name" value="PRK00395.1"/>
    <property type="match status" value="1"/>
</dbReference>
<dbReference type="PANTHER" id="PTHR34772">
    <property type="entry name" value="RNA-BINDING PROTEIN HFQ"/>
    <property type="match status" value="1"/>
</dbReference>
<dbReference type="PANTHER" id="PTHR34772:SF1">
    <property type="entry name" value="RNA-BINDING PROTEIN HFQ"/>
    <property type="match status" value="1"/>
</dbReference>
<dbReference type="Pfam" id="PF17209">
    <property type="entry name" value="Hfq"/>
    <property type="match status" value="1"/>
</dbReference>
<dbReference type="SUPFAM" id="SSF50182">
    <property type="entry name" value="Sm-like ribonucleoproteins"/>
    <property type="match status" value="1"/>
</dbReference>
<dbReference type="PROSITE" id="PS52002">
    <property type="entry name" value="SM"/>
    <property type="match status" value="1"/>
</dbReference>
<comment type="function">
    <text evidence="1">RNA chaperone that binds small regulatory RNA (sRNAs) and mRNAs to facilitate mRNA translational regulation in response to envelope stress, environmental stress and changes in metabolite concentrations. Also binds with high specificity to tRNAs.</text>
</comment>
<comment type="subunit">
    <text evidence="1">Homohexamer.</text>
</comment>
<comment type="similarity">
    <text evidence="1">Belongs to the Hfq family.</text>
</comment>
<feature type="chain" id="PRO_1000135039" description="RNA-binding protein Hfq">
    <location>
        <begin position="1"/>
        <end position="84"/>
    </location>
</feature>
<feature type="domain" description="Sm" evidence="2">
    <location>
        <begin position="10"/>
        <end position="70"/>
    </location>
</feature>
<proteinExistence type="inferred from homology"/>
<keyword id="KW-1185">Reference proteome</keyword>
<keyword id="KW-0694">RNA-binding</keyword>
<keyword id="KW-0346">Stress response</keyword>
<name>HFQ_NATTJ</name>
<accession>B2A3Y0</accession>
<organism>
    <name type="scientific">Natranaerobius thermophilus (strain ATCC BAA-1301 / DSM 18059 / JW/NM-WN-LF)</name>
    <dbReference type="NCBI Taxonomy" id="457570"/>
    <lineage>
        <taxon>Bacteria</taxon>
        <taxon>Bacillati</taxon>
        <taxon>Bacillota</taxon>
        <taxon>Clostridia</taxon>
        <taxon>Natranaerobiales</taxon>
        <taxon>Natranaerobiaceae</taxon>
        <taxon>Natranaerobius</taxon>
    </lineage>
</organism>
<gene>
    <name evidence="1" type="primary">hfq</name>
    <name type="ordered locus">Nther_1499</name>
</gene>